<sequence length="107" mass="11437">MQFSTTPTLEGQTIVEYCGVVTGEAILGANIFRDFFAGIRDIVGGRSGAYEKELRKAREIAFEELGSQARALGADAVVGIDIDYETVGQNGSMLMVSVSGTAVKTRR</sequence>
<proteinExistence type="inferred from homology"/>
<organism>
    <name type="scientific">Escherichia coli O127:H6 (strain E2348/69 / EPEC)</name>
    <dbReference type="NCBI Taxonomy" id="574521"/>
    <lineage>
        <taxon>Bacteria</taxon>
        <taxon>Pseudomonadati</taxon>
        <taxon>Pseudomonadota</taxon>
        <taxon>Gammaproteobacteria</taxon>
        <taxon>Enterobacterales</taxon>
        <taxon>Enterobacteriaceae</taxon>
        <taxon>Escherichia</taxon>
    </lineage>
</organism>
<protein>
    <recommendedName>
        <fullName evidence="1">UPF0145 protein YbjQ</fullName>
    </recommendedName>
</protein>
<feature type="chain" id="PRO_1000200229" description="UPF0145 protein YbjQ">
    <location>
        <begin position="1"/>
        <end position="107"/>
    </location>
</feature>
<accession>B7UMV8</accession>
<comment type="similarity">
    <text evidence="1">Belongs to the UPF0145 family.</text>
</comment>
<dbReference type="EMBL" id="FM180568">
    <property type="protein sequence ID" value="CAS08411.1"/>
    <property type="molecule type" value="Genomic_DNA"/>
</dbReference>
<dbReference type="RefSeq" id="WP_001160737.1">
    <property type="nucleotide sequence ID" value="NC_011601.1"/>
</dbReference>
<dbReference type="SMR" id="B7UMV8"/>
<dbReference type="KEGG" id="ecg:E2348C_0863"/>
<dbReference type="HOGENOM" id="CLU_117144_3_0_6"/>
<dbReference type="Proteomes" id="UP000008205">
    <property type="component" value="Chromosome"/>
</dbReference>
<dbReference type="Gene3D" id="3.30.110.70">
    <property type="entry name" value="Hypothetical protein apc22750. Chain B"/>
    <property type="match status" value="1"/>
</dbReference>
<dbReference type="HAMAP" id="MF_00338">
    <property type="entry name" value="UPF0145"/>
    <property type="match status" value="1"/>
</dbReference>
<dbReference type="InterPro" id="IPR035439">
    <property type="entry name" value="UPF0145_dom_sf"/>
</dbReference>
<dbReference type="InterPro" id="IPR002765">
    <property type="entry name" value="UPF0145_YbjQ-like"/>
</dbReference>
<dbReference type="NCBIfam" id="NF002776">
    <property type="entry name" value="PRK02877.1"/>
    <property type="match status" value="1"/>
</dbReference>
<dbReference type="PANTHER" id="PTHR34068">
    <property type="entry name" value="UPF0145 PROTEIN YBJQ"/>
    <property type="match status" value="1"/>
</dbReference>
<dbReference type="PANTHER" id="PTHR34068:SF1">
    <property type="entry name" value="UPF0145 PROTEIN YBJQ"/>
    <property type="match status" value="1"/>
</dbReference>
<dbReference type="Pfam" id="PF01906">
    <property type="entry name" value="YbjQ_1"/>
    <property type="match status" value="1"/>
</dbReference>
<dbReference type="SUPFAM" id="SSF117782">
    <property type="entry name" value="YbjQ-like"/>
    <property type="match status" value="1"/>
</dbReference>
<keyword id="KW-1185">Reference proteome</keyword>
<gene>
    <name evidence="1" type="primary">ybjQ</name>
    <name type="ordered locus">E2348C_0863</name>
</gene>
<reference key="1">
    <citation type="journal article" date="2009" name="J. Bacteriol.">
        <title>Complete genome sequence and comparative genome analysis of enteropathogenic Escherichia coli O127:H6 strain E2348/69.</title>
        <authorList>
            <person name="Iguchi A."/>
            <person name="Thomson N.R."/>
            <person name="Ogura Y."/>
            <person name="Saunders D."/>
            <person name="Ooka T."/>
            <person name="Henderson I.R."/>
            <person name="Harris D."/>
            <person name="Asadulghani M."/>
            <person name="Kurokawa K."/>
            <person name="Dean P."/>
            <person name="Kenny B."/>
            <person name="Quail M.A."/>
            <person name="Thurston S."/>
            <person name="Dougan G."/>
            <person name="Hayashi T."/>
            <person name="Parkhill J."/>
            <person name="Frankel G."/>
        </authorList>
    </citation>
    <scope>NUCLEOTIDE SEQUENCE [LARGE SCALE GENOMIC DNA]</scope>
    <source>
        <strain>E2348/69 / EPEC</strain>
    </source>
</reference>
<name>YBJQ_ECO27</name>
<evidence type="ECO:0000255" key="1">
    <source>
        <dbReference type="HAMAP-Rule" id="MF_00338"/>
    </source>
</evidence>